<evidence type="ECO:0000255" key="1">
    <source>
        <dbReference type="HAMAP-Rule" id="MF_00464"/>
    </source>
</evidence>
<protein>
    <recommendedName>
        <fullName evidence="1">S-adenosylmethionine decarboxylase proenzyme</fullName>
        <shortName evidence="1">AdoMetDC</shortName>
        <shortName evidence="1">SAMDC</shortName>
        <ecNumber evidence="1">4.1.1.50</ecNumber>
    </recommendedName>
    <component>
        <recommendedName>
            <fullName evidence="1">S-adenosylmethionine decarboxylase beta chain</fullName>
        </recommendedName>
    </component>
    <component>
        <recommendedName>
            <fullName evidence="1">S-adenosylmethionine decarboxylase alpha chain</fullName>
        </recommendedName>
    </component>
</protein>
<feature type="chain" id="PRO_0000030157" description="S-adenosylmethionine decarboxylase beta chain" evidence="1">
    <location>
        <begin position="1"/>
        <end position="63"/>
    </location>
</feature>
<feature type="chain" id="PRO_0000030158" description="S-adenosylmethionine decarboxylase alpha chain" evidence="1">
    <location>
        <begin position="64"/>
        <end position="131"/>
    </location>
</feature>
<feature type="active site" description="Schiff-base intermediate with substrate; via pyruvic acid" evidence="1">
    <location>
        <position position="64"/>
    </location>
</feature>
<feature type="active site" description="Proton acceptor; for processing activity" evidence="1">
    <location>
        <position position="69"/>
    </location>
</feature>
<feature type="active site" description="Proton donor; for catalytic activity" evidence="1">
    <location>
        <position position="84"/>
    </location>
</feature>
<feature type="site" description="Cleavage (non-hydrolytic); by autolysis" evidence="1">
    <location>
        <begin position="63"/>
        <end position="64"/>
    </location>
</feature>
<feature type="modified residue" description="Pyruvic acid (Ser); by autocatalysis" evidence="1">
    <location>
        <position position="64"/>
    </location>
</feature>
<dbReference type="EC" id="4.1.1.50" evidence="1"/>
<dbReference type="EMBL" id="AL445066">
    <property type="protein sequence ID" value="CAC12321.1"/>
    <property type="molecule type" value="Genomic_DNA"/>
</dbReference>
<dbReference type="RefSeq" id="WP_010901603.1">
    <property type="nucleotide sequence ID" value="NC_002578.1"/>
</dbReference>
<dbReference type="SMR" id="Q9HIY0"/>
<dbReference type="FunCoup" id="Q9HIY0">
    <property type="interactions" value="16"/>
</dbReference>
<dbReference type="STRING" id="273075.gene:9572419"/>
<dbReference type="PaxDb" id="273075-Ta1196"/>
<dbReference type="EnsemblBacteria" id="CAC12321">
    <property type="protein sequence ID" value="CAC12321"/>
    <property type="gene ID" value="CAC12321"/>
</dbReference>
<dbReference type="KEGG" id="tac:Ta1196"/>
<dbReference type="eggNOG" id="arCOG00279">
    <property type="taxonomic scope" value="Archaea"/>
</dbReference>
<dbReference type="HOGENOM" id="CLU_125470_2_3_2"/>
<dbReference type="InParanoid" id="Q9HIY0"/>
<dbReference type="OrthoDB" id="114016at2157"/>
<dbReference type="UniPathway" id="UPA00331">
    <property type="reaction ID" value="UER00451"/>
</dbReference>
<dbReference type="Proteomes" id="UP000001024">
    <property type="component" value="Chromosome"/>
</dbReference>
<dbReference type="GO" id="GO:0005829">
    <property type="term" value="C:cytosol"/>
    <property type="evidence" value="ECO:0007669"/>
    <property type="project" value="TreeGrafter"/>
</dbReference>
<dbReference type="GO" id="GO:0004014">
    <property type="term" value="F:adenosylmethionine decarboxylase activity"/>
    <property type="evidence" value="ECO:0007669"/>
    <property type="project" value="UniProtKB-UniRule"/>
</dbReference>
<dbReference type="GO" id="GO:0008295">
    <property type="term" value="P:spermidine biosynthetic process"/>
    <property type="evidence" value="ECO:0007669"/>
    <property type="project" value="UniProtKB-UniRule"/>
</dbReference>
<dbReference type="Gene3D" id="3.60.90.10">
    <property type="entry name" value="S-adenosylmethionine decarboxylase"/>
    <property type="match status" value="1"/>
</dbReference>
<dbReference type="HAMAP" id="MF_00464">
    <property type="entry name" value="AdoMetDC_1"/>
    <property type="match status" value="1"/>
</dbReference>
<dbReference type="InterPro" id="IPR003826">
    <property type="entry name" value="AdoMetDC_fam_prok"/>
</dbReference>
<dbReference type="InterPro" id="IPR016067">
    <property type="entry name" value="S-AdoMet_deCO2ase_core"/>
</dbReference>
<dbReference type="InterPro" id="IPR017716">
    <property type="entry name" value="S-AdoMet_deCOase_pro-enz"/>
</dbReference>
<dbReference type="NCBIfam" id="TIGR03330">
    <property type="entry name" value="SAM_DCase_Bsu"/>
    <property type="match status" value="1"/>
</dbReference>
<dbReference type="PANTHER" id="PTHR33866">
    <property type="entry name" value="S-ADENOSYLMETHIONINE DECARBOXYLASE PROENZYME"/>
    <property type="match status" value="1"/>
</dbReference>
<dbReference type="PANTHER" id="PTHR33866:SF2">
    <property type="entry name" value="S-ADENOSYLMETHIONINE DECARBOXYLASE PROENZYME"/>
    <property type="match status" value="1"/>
</dbReference>
<dbReference type="Pfam" id="PF02675">
    <property type="entry name" value="AdoMet_dc"/>
    <property type="match status" value="1"/>
</dbReference>
<dbReference type="SUPFAM" id="SSF56276">
    <property type="entry name" value="S-adenosylmethionine decarboxylase"/>
    <property type="match status" value="1"/>
</dbReference>
<keyword id="KW-0068">Autocatalytic cleavage</keyword>
<keyword id="KW-0210">Decarboxylase</keyword>
<keyword id="KW-0456">Lyase</keyword>
<keyword id="KW-0620">Polyamine biosynthesis</keyword>
<keyword id="KW-0670">Pyruvate</keyword>
<keyword id="KW-1185">Reference proteome</keyword>
<keyword id="KW-0949">S-adenosyl-L-methionine</keyword>
<keyword id="KW-0704">Schiff base</keyword>
<keyword id="KW-0745">Spermidine biosynthesis</keyword>
<keyword id="KW-0865">Zymogen</keyword>
<name>SPEH_THEAC</name>
<sequence length="131" mass="14574">MEVGVGIHIIADFYGVDSELIATTERMYPIIEGAVEYGRLTKISSDYYQFRPKGASGIVLLAESHLSFHTWPEYGLVTLDIYTCGDPKTADDAFAYLVDKLRPTSISTRKIVRGDMIEEAGENQIEEAALH</sequence>
<gene>
    <name evidence="1" type="primary">speH</name>
    <name type="ordered locus">Ta1196</name>
</gene>
<reference key="1">
    <citation type="journal article" date="2000" name="Nature">
        <title>The genome sequence of the thermoacidophilic scavenger Thermoplasma acidophilum.</title>
        <authorList>
            <person name="Ruepp A."/>
            <person name="Graml W."/>
            <person name="Santos-Martinez M.-L."/>
            <person name="Koretke K.K."/>
            <person name="Volker C."/>
            <person name="Mewes H.-W."/>
            <person name="Frishman D."/>
            <person name="Stocker S."/>
            <person name="Lupas A.N."/>
            <person name="Baumeister W."/>
        </authorList>
    </citation>
    <scope>NUCLEOTIDE SEQUENCE [LARGE SCALE GENOMIC DNA]</scope>
    <source>
        <strain>ATCC 25905 / DSM 1728 / JCM 9062 / NBRC 15155 / AMRC-C165</strain>
    </source>
</reference>
<organism>
    <name type="scientific">Thermoplasma acidophilum (strain ATCC 25905 / DSM 1728 / JCM 9062 / NBRC 15155 / AMRC-C165)</name>
    <dbReference type="NCBI Taxonomy" id="273075"/>
    <lineage>
        <taxon>Archaea</taxon>
        <taxon>Methanobacteriati</taxon>
        <taxon>Thermoplasmatota</taxon>
        <taxon>Thermoplasmata</taxon>
        <taxon>Thermoplasmatales</taxon>
        <taxon>Thermoplasmataceae</taxon>
        <taxon>Thermoplasma</taxon>
    </lineage>
</organism>
<proteinExistence type="inferred from homology"/>
<comment type="function">
    <text evidence="1">Catalyzes the decarboxylation of S-adenosylmethionine to S-adenosylmethioninamine (dcAdoMet), the propylamine donor required for the synthesis of the polyamines spermine and spermidine from the diamine putrescine.</text>
</comment>
<comment type="catalytic activity">
    <reaction evidence="1">
        <text>S-adenosyl-L-methionine + H(+) = S-adenosyl 3-(methylsulfanyl)propylamine + CO2</text>
        <dbReference type="Rhea" id="RHEA:15981"/>
        <dbReference type="ChEBI" id="CHEBI:15378"/>
        <dbReference type="ChEBI" id="CHEBI:16526"/>
        <dbReference type="ChEBI" id="CHEBI:57443"/>
        <dbReference type="ChEBI" id="CHEBI:59789"/>
        <dbReference type="EC" id="4.1.1.50"/>
    </reaction>
</comment>
<comment type="cofactor">
    <cofactor evidence="1">
        <name>pyruvate</name>
        <dbReference type="ChEBI" id="CHEBI:15361"/>
    </cofactor>
    <text evidence="1">Binds 1 pyruvoyl group covalently per subunit.</text>
</comment>
<comment type="pathway">
    <text evidence="1">Amine and polyamine biosynthesis; S-adenosylmethioninamine biosynthesis; S-adenosylmethioninamine from S-adenosyl-L-methionine: step 1/1.</text>
</comment>
<comment type="subunit">
    <text evidence="1">Heterotetramer of two alpha and two beta chains arranged as a dimer of alpha/beta heterodimers.</text>
</comment>
<comment type="PTM">
    <text evidence="1">Is synthesized initially as an inactive proenzyme. Formation of the active enzyme involves a self-maturation process in which the active site pyruvoyl group is generated from an internal serine residue via an autocatalytic post-translational modification. Two non-identical subunits are generated from the proenzyme in this reaction, and the pyruvate is formed at the N-terminus of the alpha chain, which is derived from the carboxyl end of the proenzyme. The post-translation cleavage follows an unusual pathway, termed non-hydrolytic serinolysis, in which the side chain hydroxyl group of the serine supplies its oxygen atom to form the C-terminus of the beta chain, while the remainder of the serine residue undergoes an oxidative deamination to produce ammonia and the pyruvoyl group blocking the N-terminus of the alpha chain.</text>
</comment>
<comment type="similarity">
    <text evidence="1">Belongs to the prokaryotic AdoMetDC family. Type 1 subfamily.</text>
</comment>
<accession>Q9HIY0</accession>